<keyword id="KW-0106">Calcium</keyword>
<keyword id="KW-0186">Copper</keyword>
<keyword id="KW-0249">Electron transport</keyword>
<keyword id="KW-0349">Heme</keyword>
<keyword id="KW-0408">Iron</keyword>
<keyword id="KW-0460">Magnesium</keyword>
<keyword id="KW-0472">Membrane</keyword>
<keyword id="KW-0479">Metal-binding</keyword>
<keyword id="KW-0496">Mitochondrion</keyword>
<keyword id="KW-0999">Mitochondrion inner membrane</keyword>
<keyword id="KW-0679">Respiratory chain</keyword>
<keyword id="KW-1278">Translocase</keyword>
<keyword id="KW-0812">Transmembrane</keyword>
<keyword id="KW-1133">Transmembrane helix</keyword>
<keyword id="KW-0813">Transport</keyword>
<gene>
    <name type="primary">COX1</name>
</gene>
<evidence type="ECO:0000250" key="1">
    <source>
        <dbReference type="UniProtKB" id="P00396"/>
    </source>
</evidence>
<evidence type="ECO:0000250" key="2">
    <source>
        <dbReference type="UniProtKB" id="P00401"/>
    </source>
</evidence>
<evidence type="ECO:0000255" key="3"/>
<evidence type="ECO:0000305" key="4"/>
<geneLocation type="mitochondrion"/>
<proteinExistence type="inferred from homology"/>
<protein>
    <recommendedName>
        <fullName>Cytochrome c oxidase subunit 1</fullName>
        <ecNumber>7.1.1.9</ecNumber>
    </recommendedName>
    <alternativeName>
        <fullName>Cytochrome c oxidase polypeptide I</fullName>
    </alternativeName>
</protein>
<reference key="1">
    <citation type="journal article" date="1995" name="Curr. Genet.">
        <title>The complete mitochondrial DNA sequence of Hansenula wingei reveals new characteristics of yeast mitochondria.</title>
        <authorList>
            <person name="Sekito T."/>
            <person name="Okamoto K."/>
            <person name="Kitano H."/>
            <person name="Yoshida K."/>
        </authorList>
    </citation>
    <scope>NUCLEOTIDE SEQUENCE [LARGE SCALE GENOMIC DNA]</scope>
    <source>
        <strain>21</strain>
    </source>
</reference>
<accession>P48868</accession>
<organism>
    <name type="scientific">Wickerhamomyces canadensis</name>
    <name type="common">Yeast</name>
    <name type="synonym">Pichia canadensis</name>
    <dbReference type="NCBI Taxonomy" id="1156965"/>
    <lineage>
        <taxon>Eukaryota</taxon>
        <taxon>Fungi</taxon>
        <taxon>Dikarya</taxon>
        <taxon>Ascomycota</taxon>
        <taxon>Saccharomycotina</taxon>
        <taxon>Saccharomycetes</taxon>
        <taxon>Phaffomycetales</taxon>
        <taxon>Wickerhamomycetaceae</taxon>
        <taxon>Wickerhamomyces</taxon>
    </lineage>
</organism>
<sequence>MYIQRWLYSTNAKDIAILYFIFAIFSGVIGSTMSLIIRLELAAPGNQILHGNHQLFNVLVVGHALLMIFFLVMPGLVGGFGNYMLPLLIGASDMSFARLNNISFWLLPPALVCLVASTLIESWAGTGWTIYPPLSGIQAHSSPSVDLGIFAIHLTSISSLLGAINFIATSYNMRTNGMSYSKMPLFVWAIIITAVMLLLSLPVLTAGVTMLLMDRNFNTSFFEVAGGGDPVLYQHLFWFFGHPEVYILIVPGFGIISHIVSTYSKKPVFGEISMVYAMASIAFLGFLVWSHHMYIVGLDADTRAYFTSSTMVIAVPTGIKIFSWLATLYGGSIRLAVPMLYAIAFLFLFTIGGLTGVALANASLDVAFHDTYYVVGHFHYVLSMGAIFSLFAGYYYWSPQILGLYFNERLAQIQFWLIFVGANVIFMPMHFLGLQGMPRRIPDYPDAYAGWNYVSSIGSVIAIISLALFIYIIYDQLINGLTNKIDNKSVVYSKAPDFVESNTIFANNSIKSASIEFLLNSPPAIHSFNTPAVQS</sequence>
<dbReference type="EC" id="7.1.1.9"/>
<dbReference type="EMBL" id="D31785">
    <property type="protein sequence ID" value="BAA06563.2"/>
    <property type="molecule type" value="Genomic_DNA"/>
</dbReference>
<dbReference type="PIR" id="S58740">
    <property type="entry name" value="S58740"/>
</dbReference>
<dbReference type="RefSeq" id="NP_038208.1">
    <property type="nucleotide sequence ID" value="NC_001762.1"/>
</dbReference>
<dbReference type="SMR" id="P48868"/>
<dbReference type="GeneID" id="800565"/>
<dbReference type="UniPathway" id="UPA00705"/>
<dbReference type="GO" id="GO:0005743">
    <property type="term" value="C:mitochondrial inner membrane"/>
    <property type="evidence" value="ECO:0007669"/>
    <property type="project" value="UniProtKB-SubCell"/>
</dbReference>
<dbReference type="GO" id="GO:0045277">
    <property type="term" value="C:respiratory chain complex IV"/>
    <property type="evidence" value="ECO:0007669"/>
    <property type="project" value="InterPro"/>
</dbReference>
<dbReference type="GO" id="GO:0004129">
    <property type="term" value="F:cytochrome-c oxidase activity"/>
    <property type="evidence" value="ECO:0007669"/>
    <property type="project" value="UniProtKB-EC"/>
</dbReference>
<dbReference type="GO" id="GO:0020037">
    <property type="term" value="F:heme binding"/>
    <property type="evidence" value="ECO:0007669"/>
    <property type="project" value="InterPro"/>
</dbReference>
<dbReference type="GO" id="GO:0046872">
    <property type="term" value="F:metal ion binding"/>
    <property type="evidence" value="ECO:0007669"/>
    <property type="project" value="UniProtKB-KW"/>
</dbReference>
<dbReference type="GO" id="GO:0015990">
    <property type="term" value="P:electron transport coupled proton transport"/>
    <property type="evidence" value="ECO:0007669"/>
    <property type="project" value="TreeGrafter"/>
</dbReference>
<dbReference type="GO" id="GO:0006123">
    <property type="term" value="P:mitochondrial electron transport, cytochrome c to oxygen"/>
    <property type="evidence" value="ECO:0007669"/>
    <property type="project" value="TreeGrafter"/>
</dbReference>
<dbReference type="CDD" id="cd01663">
    <property type="entry name" value="Cyt_c_Oxidase_I"/>
    <property type="match status" value="1"/>
</dbReference>
<dbReference type="FunFam" id="1.20.210.10:FF:000001">
    <property type="entry name" value="Cytochrome c oxidase subunit 1"/>
    <property type="match status" value="1"/>
</dbReference>
<dbReference type="Gene3D" id="1.20.210.10">
    <property type="entry name" value="Cytochrome c oxidase-like, subunit I domain"/>
    <property type="match status" value="1"/>
</dbReference>
<dbReference type="InterPro" id="IPR023616">
    <property type="entry name" value="Cyt_c_oxase-like_su1_dom"/>
</dbReference>
<dbReference type="InterPro" id="IPR036927">
    <property type="entry name" value="Cyt_c_oxase-like_su1_sf"/>
</dbReference>
<dbReference type="InterPro" id="IPR000883">
    <property type="entry name" value="Cyt_C_Oxase_1"/>
</dbReference>
<dbReference type="InterPro" id="IPR023615">
    <property type="entry name" value="Cyt_c_Oxase_su1_BS"/>
</dbReference>
<dbReference type="InterPro" id="IPR033944">
    <property type="entry name" value="Cyt_c_oxase_su1_dom"/>
</dbReference>
<dbReference type="PANTHER" id="PTHR10422">
    <property type="entry name" value="CYTOCHROME C OXIDASE SUBUNIT 1"/>
    <property type="match status" value="1"/>
</dbReference>
<dbReference type="PANTHER" id="PTHR10422:SF18">
    <property type="entry name" value="CYTOCHROME C OXIDASE SUBUNIT 1"/>
    <property type="match status" value="1"/>
</dbReference>
<dbReference type="Pfam" id="PF00115">
    <property type="entry name" value="COX1"/>
    <property type="match status" value="1"/>
</dbReference>
<dbReference type="PRINTS" id="PR01165">
    <property type="entry name" value="CYCOXIDASEI"/>
</dbReference>
<dbReference type="SUPFAM" id="SSF81442">
    <property type="entry name" value="Cytochrome c oxidase subunit I-like"/>
    <property type="match status" value="1"/>
</dbReference>
<dbReference type="PROSITE" id="PS50855">
    <property type="entry name" value="COX1"/>
    <property type="match status" value="1"/>
</dbReference>
<dbReference type="PROSITE" id="PS00077">
    <property type="entry name" value="COX1_CUB"/>
    <property type="match status" value="1"/>
</dbReference>
<feature type="chain" id="PRO_0000183341" description="Cytochrome c oxidase subunit 1">
    <location>
        <begin position="1"/>
        <end position="535"/>
    </location>
</feature>
<feature type="transmembrane region" description="Helical" evidence="3">
    <location>
        <begin position="17"/>
        <end position="37"/>
    </location>
</feature>
<feature type="transmembrane region" description="Helical" evidence="3">
    <location>
        <begin position="58"/>
        <end position="78"/>
    </location>
</feature>
<feature type="transmembrane region" description="Helical" evidence="3">
    <location>
        <begin position="104"/>
        <end position="124"/>
    </location>
</feature>
<feature type="transmembrane region" description="Helical" evidence="3">
    <location>
        <begin position="147"/>
        <end position="167"/>
    </location>
</feature>
<feature type="transmembrane region" description="Helical" evidence="3">
    <location>
        <begin position="184"/>
        <end position="204"/>
    </location>
</feature>
<feature type="transmembrane region" description="Helical" evidence="3">
    <location>
        <begin position="236"/>
        <end position="256"/>
    </location>
</feature>
<feature type="transmembrane region" description="Helical" evidence="3">
    <location>
        <begin position="268"/>
        <end position="288"/>
    </location>
</feature>
<feature type="transmembrane region" description="Helical" evidence="3">
    <location>
        <begin position="311"/>
        <end position="331"/>
    </location>
</feature>
<feature type="transmembrane region" description="Helical" evidence="3">
    <location>
        <begin position="339"/>
        <end position="359"/>
    </location>
</feature>
<feature type="transmembrane region" description="Helical" evidence="3">
    <location>
        <begin position="373"/>
        <end position="393"/>
    </location>
</feature>
<feature type="transmembrane region" description="Helical" evidence="3">
    <location>
        <begin position="413"/>
        <end position="433"/>
    </location>
</feature>
<feature type="transmembrane region" description="Helical" evidence="3">
    <location>
        <begin position="453"/>
        <end position="473"/>
    </location>
</feature>
<feature type="binding site" evidence="2">
    <location>
        <position position="40"/>
    </location>
    <ligand>
        <name>Ca(2+)</name>
        <dbReference type="ChEBI" id="CHEBI:29108"/>
    </ligand>
</feature>
<feature type="binding site" evidence="2">
    <location>
        <position position="43"/>
    </location>
    <ligand>
        <name>Ca(2+)</name>
        <dbReference type="ChEBI" id="CHEBI:29108"/>
    </ligand>
</feature>
<feature type="binding site" evidence="2">
    <location>
        <position position="45"/>
    </location>
    <ligand>
        <name>Ca(2+)</name>
        <dbReference type="ChEBI" id="CHEBI:29108"/>
    </ligand>
</feature>
<feature type="binding site" description="axial binding residue" evidence="2">
    <location>
        <position position="63"/>
    </location>
    <ligand>
        <name>Fe(II)-heme a</name>
        <dbReference type="ChEBI" id="CHEBI:61715"/>
        <note>low-spin</note>
    </ligand>
    <ligandPart>
        <name>Fe</name>
        <dbReference type="ChEBI" id="CHEBI:18248"/>
    </ligandPart>
</feature>
<feature type="binding site" evidence="2">
    <location>
        <position position="242"/>
    </location>
    <ligand>
        <name>Cu cation</name>
        <dbReference type="ChEBI" id="CHEBI:23378"/>
        <label>B</label>
    </ligand>
</feature>
<feature type="binding site" evidence="1">
    <location>
        <position position="246"/>
    </location>
    <ligand>
        <name>O2</name>
        <dbReference type="ChEBI" id="CHEBI:15379"/>
    </ligand>
</feature>
<feature type="binding site" evidence="2">
    <location>
        <position position="291"/>
    </location>
    <ligand>
        <name>Cu cation</name>
        <dbReference type="ChEBI" id="CHEBI:23378"/>
        <label>B</label>
    </ligand>
</feature>
<feature type="binding site" evidence="2">
    <location>
        <position position="292"/>
    </location>
    <ligand>
        <name>Cu cation</name>
        <dbReference type="ChEBI" id="CHEBI:23378"/>
        <label>B</label>
    </ligand>
</feature>
<feature type="binding site" evidence="2">
    <location>
        <position position="369"/>
    </location>
    <ligand>
        <name>Mg(2+)</name>
        <dbReference type="ChEBI" id="CHEBI:18420"/>
        <note>ligand shared with subunit 2</note>
    </ligand>
</feature>
<feature type="binding site" evidence="2">
    <location>
        <position position="370"/>
    </location>
    <ligand>
        <name>Mg(2+)</name>
        <dbReference type="ChEBI" id="CHEBI:18420"/>
        <note>ligand shared with subunit 2</note>
    </ligand>
</feature>
<feature type="binding site" description="axial binding residue" evidence="2">
    <location>
        <position position="377"/>
    </location>
    <ligand>
        <name>heme a3</name>
        <dbReference type="ChEBI" id="CHEBI:83282"/>
        <note>high-spin</note>
    </ligand>
    <ligandPart>
        <name>Fe</name>
        <dbReference type="ChEBI" id="CHEBI:18248"/>
    </ligandPart>
</feature>
<feature type="binding site" description="axial binding residue" evidence="2">
    <location>
        <position position="379"/>
    </location>
    <ligand>
        <name>Fe(II)-heme a</name>
        <dbReference type="ChEBI" id="CHEBI:61715"/>
        <note>low-spin</note>
    </ligand>
    <ligandPart>
        <name>Fe</name>
        <dbReference type="ChEBI" id="CHEBI:18248"/>
    </ligandPart>
</feature>
<feature type="binding site" evidence="2">
    <location>
        <position position="442"/>
    </location>
    <ligand>
        <name>Ca(2+)</name>
        <dbReference type="ChEBI" id="CHEBI:29108"/>
    </ligand>
</feature>
<feature type="cross-link" description="1'-histidyl-3'-tyrosine (His-Tyr)" evidence="2">
    <location>
        <begin position="242"/>
        <end position="246"/>
    </location>
</feature>
<name>COX1_WICCA</name>
<comment type="function">
    <text evidence="2">Component of the cytochrome c oxidase, the last enzyme in the mitochondrial electron transport chain which drives oxidative phosphorylation. The respiratory chain contains 3 multisubunit complexes succinate dehydrogenase (complex II, CII), ubiquinol-cytochrome c oxidoreductase (cytochrome b-c1 complex, complex III, CIII) and cytochrome c oxidase (complex IV, CIV), that cooperate to transfer electrons derived from NADH and succinate to molecular oxygen, creating an electrochemical gradient over the inner membrane that drives transmembrane transport and the ATP synthase. Cytochrome c oxidase is the component of the respiratory chain that catalyzes the reduction of oxygen to water. Electrons originating from reduced cytochrome c in the intermembrane space (IMS) are transferred via the dinuclear copper A center (CU(A)) of subunit 2 and heme A of subunit 1 to the active site in subunit 1, a binuclear center (BNC) formed by heme A3 and copper B (CU(B)). The BNC reduces molecular oxygen to 2 water molecules using 4 electrons from cytochrome c in the IMS and 4 protons from the mitochondrial matrix.</text>
</comment>
<comment type="catalytic activity">
    <reaction evidence="2">
        <text>4 Fe(II)-[cytochrome c] + O2 + 8 H(+)(in) = 4 Fe(III)-[cytochrome c] + 2 H2O + 4 H(+)(out)</text>
        <dbReference type="Rhea" id="RHEA:11436"/>
        <dbReference type="Rhea" id="RHEA-COMP:10350"/>
        <dbReference type="Rhea" id="RHEA-COMP:14399"/>
        <dbReference type="ChEBI" id="CHEBI:15377"/>
        <dbReference type="ChEBI" id="CHEBI:15378"/>
        <dbReference type="ChEBI" id="CHEBI:15379"/>
        <dbReference type="ChEBI" id="CHEBI:29033"/>
        <dbReference type="ChEBI" id="CHEBI:29034"/>
        <dbReference type="EC" id="7.1.1.9"/>
    </reaction>
    <physiologicalReaction direction="left-to-right" evidence="2">
        <dbReference type="Rhea" id="RHEA:11437"/>
    </physiologicalReaction>
</comment>
<comment type="cofactor">
    <cofactor evidence="2">
        <name>heme</name>
        <dbReference type="ChEBI" id="CHEBI:30413"/>
    </cofactor>
    <text evidence="2">Binds 2 heme A groups non-covalently per subunit.</text>
</comment>
<comment type="cofactor">
    <cofactor evidence="2">
        <name>Cu cation</name>
        <dbReference type="ChEBI" id="CHEBI:23378"/>
    </cofactor>
    <text evidence="2">Binds a copper B center.</text>
</comment>
<comment type="pathway">
    <text evidence="2">Energy metabolism; oxidative phosphorylation.</text>
</comment>
<comment type="subunit">
    <text evidence="2">Component of the cytochrome c oxidase (complex IV, CIV), a multisubunit enzyme composed of a catalytic core of 3 subunits and several supernumerary subunits. The complex exists as a monomer or a dimer and forms supercomplexes (SCs) in the inner mitochondrial membrane with ubiquinol-cytochrome c oxidoreductase (cytochrome b-c1 complex, complex III, CIII).</text>
</comment>
<comment type="subcellular location">
    <subcellularLocation>
        <location evidence="2">Mitochondrion inner membrane</location>
        <topology evidence="2">Multi-pass membrane protein</topology>
    </subcellularLocation>
</comment>
<comment type="similarity">
    <text evidence="4">Belongs to the heme-copper respiratory oxidase family.</text>
</comment>